<comment type="function">
    <text evidence="1">Directly regulates filament dynamics and has been implicated in a number of complex developmental and morphological processes, including mRNA localization and the establishment of cell polarity.</text>
</comment>
<comment type="subunit">
    <text evidence="1">Homodimer. Binds actin monomers (By similarity).</text>
</comment>
<comment type="subcellular location">
    <subcellularLocation>
        <location evidence="1">Cell membrane</location>
        <topology evidence="1">Peripheral membrane protein</topology>
    </subcellularLocation>
</comment>
<comment type="similarity">
    <text evidence="6">Belongs to the CAP family.</text>
</comment>
<proteinExistence type="evidence at protein level"/>
<keyword id="KW-0009">Actin-binding</keyword>
<keyword id="KW-1003">Cell membrane</keyword>
<keyword id="KW-0903">Direct protein sequencing</keyword>
<keyword id="KW-1017">Isopeptide bond</keyword>
<keyword id="KW-0472">Membrane</keyword>
<keyword id="KW-0488">Methylation</keyword>
<keyword id="KW-0597">Phosphoprotein</keyword>
<keyword id="KW-1185">Reference proteome</keyword>
<keyword id="KW-0832">Ubl conjugation</keyword>
<gene>
    <name type="primary">CAP1</name>
    <name type="synonym">CAP</name>
</gene>
<feature type="chain" id="PRO_0000205698" description="Adenylyl cyclase-associated protein 1">
    <location>
        <begin position="1" status="less than"/>
        <end position="233" status="greater than"/>
    </location>
</feature>
<feature type="domain" description="C-CAP/cofactor C-like" evidence="4">
    <location>
        <begin position="173" status="less than"/>
        <end position="221"/>
    </location>
</feature>
<feature type="region of interest" description="Disordered" evidence="5">
    <location>
        <begin position="43"/>
        <end position="71"/>
    </location>
</feature>
<feature type="region of interest" description="Disordered" evidence="5">
    <location>
        <begin position="91"/>
        <end position="129"/>
    </location>
</feature>
<feature type="compositionally biased region" description="Low complexity" evidence="5">
    <location>
        <begin position="53"/>
        <end position="64"/>
    </location>
</feature>
<feature type="modified residue" description="Phosphotyrosine" evidence="2">
    <location>
        <position position="14"/>
    </location>
</feature>
<feature type="modified residue" description="Phosphoserine" evidence="3">
    <location>
        <position position="17"/>
    </location>
</feature>
<feature type="modified residue" description="N6-methyllysine" evidence="3">
    <location>
        <position position="101"/>
    </location>
</feature>
<feature type="modified residue" description="Phosphoserine" evidence="3">
    <location>
        <position position="104"/>
    </location>
</feature>
<feature type="modified residue" description="Phosphoserine" evidence="3">
    <location>
        <position position="115"/>
    </location>
</feature>
<feature type="modified residue" description="Phosphoserine" evidence="3">
    <location>
        <position position="122"/>
    </location>
</feature>
<feature type="modified residue" description="Phosphoserine" evidence="3">
    <location>
        <position position="124"/>
    </location>
</feature>
<feature type="cross-link" description="Glycyl lysine isopeptide (Lys-Gly) (interchain with G-Cter in SUMO1)" evidence="3">
    <location>
        <position position="151"/>
    </location>
</feature>
<feature type="non-consecutive residues" evidence="6">
    <location>
        <begin position="20"/>
        <end position="21"/>
    </location>
</feature>
<feature type="non-consecutive residues" evidence="6">
    <location>
        <begin position="38"/>
        <end position="39"/>
    </location>
</feature>
<feature type="non-consecutive residues" evidence="6">
    <location>
        <begin position="45"/>
        <end position="46"/>
    </location>
</feature>
<feature type="non-consecutive residues" evidence="6">
    <location>
        <begin position="68"/>
        <end position="69"/>
    </location>
</feature>
<feature type="non-consecutive residues" evidence="6">
    <location>
        <begin position="130"/>
        <end position="131"/>
    </location>
</feature>
<feature type="non-consecutive residues" evidence="6">
    <location>
        <begin position="151"/>
        <end position="152"/>
    </location>
</feature>
<feature type="non-consecutive residues" evidence="6">
    <location>
        <begin position="172"/>
        <end position="173"/>
    </location>
</feature>
<feature type="non-terminal residue">
    <location>
        <position position="1"/>
    </location>
</feature>
<feature type="non-terminal residue">
    <location>
        <position position="233"/>
    </location>
</feature>
<sequence length="233" mass="25079">LEAVSHASDTHYGYGDSAAKEIGGDVLKHAEMVHTGLKEYKDVDKXGPVAKELSGLPSGPSAGSGPPPSALFAQIHQGESITHALKHVADDEKTHKNPADKAQSGPVRXGPKPFSASKPGISPSPKPVTKKWRXENXENVSNLVIDDTELKSVNSTLQIKXXINSISVDNYKVPXISINKXDGRHIYLSKNSLDCEIVSAKSSEMNVLIPTEGGDFNEFPVPEQXKXIWNGQK</sequence>
<protein>
    <recommendedName>
        <fullName>Adenylyl cyclase-associated protein 1</fullName>
        <shortName>CAP 1</shortName>
    </recommendedName>
    <alternativeName>
        <fullName>ASP-56 protein</fullName>
    </alternativeName>
</protein>
<evidence type="ECO:0000250" key="1"/>
<evidence type="ECO:0000250" key="2">
    <source>
        <dbReference type="UniProtKB" id="P40124"/>
    </source>
</evidence>
<evidence type="ECO:0000250" key="3">
    <source>
        <dbReference type="UniProtKB" id="Q01518"/>
    </source>
</evidence>
<evidence type="ECO:0000255" key="4">
    <source>
        <dbReference type="PROSITE-ProRule" id="PRU00659"/>
    </source>
</evidence>
<evidence type="ECO:0000256" key="5">
    <source>
        <dbReference type="SAM" id="MobiDB-lite"/>
    </source>
</evidence>
<evidence type="ECO:0000305" key="6"/>
<organism>
    <name type="scientific">Sus scrofa</name>
    <name type="common">Pig</name>
    <dbReference type="NCBI Taxonomy" id="9823"/>
    <lineage>
        <taxon>Eukaryota</taxon>
        <taxon>Metazoa</taxon>
        <taxon>Chordata</taxon>
        <taxon>Craniata</taxon>
        <taxon>Vertebrata</taxon>
        <taxon>Euteleostomi</taxon>
        <taxon>Mammalia</taxon>
        <taxon>Eutheria</taxon>
        <taxon>Laurasiatheria</taxon>
        <taxon>Artiodactyla</taxon>
        <taxon>Suina</taxon>
        <taxon>Suidae</taxon>
        <taxon>Sus</taxon>
    </lineage>
</organism>
<name>CAP1_PIG</name>
<accession>P40125</accession>
<reference key="1">
    <citation type="journal article" date="1992" name="FEBS Lett.">
        <title>ASP-56, a new actin sequestering protein from pig platelets with homology to CAP, an adenylate cyclase-associated protein from yeast.</title>
        <authorList>
            <person name="Gieselmann R."/>
            <person name="Mann K."/>
        </authorList>
    </citation>
    <scope>PROTEIN SEQUENCE</scope>
    <source>
        <tissue>Platelet</tissue>
    </source>
</reference>
<dbReference type="FunCoup" id="P40125">
    <property type="interactions" value="2"/>
</dbReference>
<dbReference type="PeptideAtlas" id="P40125"/>
<dbReference type="InParanoid" id="P40125"/>
<dbReference type="Proteomes" id="UP000008227">
    <property type="component" value="Unplaced"/>
</dbReference>
<dbReference type="Proteomes" id="UP000314985">
    <property type="component" value="Unplaced"/>
</dbReference>
<dbReference type="Proteomes" id="UP000694570">
    <property type="component" value="Unplaced"/>
</dbReference>
<dbReference type="Proteomes" id="UP000694571">
    <property type="component" value="Unplaced"/>
</dbReference>
<dbReference type="Proteomes" id="UP000694720">
    <property type="component" value="Unplaced"/>
</dbReference>
<dbReference type="Proteomes" id="UP000694722">
    <property type="component" value="Unplaced"/>
</dbReference>
<dbReference type="Proteomes" id="UP000694723">
    <property type="component" value="Unplaced"/>
</dbReference>
<dbReference type="Proteomes" id="UP000694724">
    <property type="component" value="Unplaced"/>
</dbReference>
<dbReference type="Proteomes" id="UP000694725">
    <property type="component" value="Unplaced"/>
</dbReference>
<dbReference type="Proteomes" id="UP000694726">
    <property type="component" value="Unplaced"/>
</dbReference>
<dbReference type="Proteomes" id="UP000694727">
    <property type="component" value="Unplaced"/>
</dbReference>
<dbReference type="Proteomes" id="UP000694728">
    <property type="component" value="Unplaced"/>
</dbReference>
<dbReference type="GO" id="GO:0005737">
    <property type="term" value="C:cytoplasm"/>
    <property type="evidence" value="ECO:0000318"/>
    <property type="project" value="GO_Central"/>
</dbReference>
<dbReference type="GO" id="GO:0005886">
    <property type="term" value="C:plasma membrane"/>
    <property type="evidence" value="ECO:0007669"/>
    <property type="project" value="UniProtKB-SubCell"/>
</dbReference>
<dbReference type="GO" id="GO:0003779">
    <property type="term" value="F:actin binding"/>
    <property type="evidence" value="ECO:0000318"/>
    <property type="project" value="GO_Central"/>
</dbReference>
<dbReference type="GO" id="GO:0008179">
    <property type="term" value="F:adenylate cyclase binding"/>
    <property type="evidence" value="ECO:0000318"/>
    <property type="project" value="GO_Central"/>
</dbReference>
<dbReference type="GO" id="GO:0007015">
    <property type="term" value="P:actin filament organization"/>
    <property type="evidence" value="ECO:0000318"/>
    <property type="project" value="GO_Central"/>
</dbReference>
<dbReference type="GO" id="GO:0019933">
    <property type="term" value="P:cAMP-mediated signaling"/>
    <property type="evidence" value="ECO:0000318"/>
    <property type="project" value="GO_Central"/>
</dbReference>
<dbReference type="GO" id="GO:0000902">
    <property type="term" value="P:cell morphogenesis"/>
    <property type="evidence" value="ECO:0000318"/>
    <property type="project" value="GO_Central"/>
</dbReference>
<dbReference type="Gene3D" id="2.160.20.70">
    <property type="match status" value="1"/>
</dbReference>
<dbReference type="InterPro" id="IPR001837">
    <property type="entry name" value="Adenylate_cyclase-assoc_CAP"/>
</dbReference>
<dbReference type="InterPro" id="IPR013912">
    <property type="entry name" value="Adenylate_cyclase-assoc_CAP_C"/>
</dbReference>
<dbReference type="InterPro" id="IPR016098">
    <property type="entry name" value="CAP/MinC_C"/>
</dbReference>
<dbReference type="InterPro" id="IPR036223">
    <property type="entry name" value="CAP_C_sf"/>
</dbReference>
<dbReference type="PANTHER" id="PTHR10652">
    <property type="entry name" value="ADENYLYL CYCLASE-ASSOCIATED PROTEIN"/>
    <property type="match status" value="1"/>
</dbReference>
<dbReference type="PANTHER" id="PTHR10652:SF1">
    <property type="entry name" value="ADENYLYL CYCLASE-ASSOCIATED PROTEIN 1"/>
    <property type="match status" value="1"/>
</dbReference>
<dbReference type="Pfam" id="PF08603">
    <property type="entry name" value="CAP_C"/>
    <property type="match status" value="1"/>
</dbReference>
<dbReference type="SUPFAM" id="SSF69340">
    <property type="entry name" value="C-terminal domain of adenylylcyclase associated protein"/>
    <property type="match status" value="1"/>
</dbReference>
<dbReference type="PROSITE" id="PS01089">
    <property type="entry name" value="CAP_2"/>
    <property type="match status" value="1"/>
</dbReference>